<evidence type="ECO:0000250" key="1"/>
<evidence type="ECO:0000255" key="2">
    <source>
        <dbReference type="PROSITE-ProRule" id="PRU00169"/>
    </source>
</evidence>
<evidence type="ECO:0000255" key="3">
    <source>
        <dbReference type="PROSITE-ProRule" id="PRU00411"/>
    </source>
</evidence>
<evidence type="ECO:0000305" key="4"/>
<proteinExistence type="inferred from homology"/>
<comment type="function">
    <text evidence="1">Member of the two-component regulatory system NreB/NreC involved in the control of dissimilatory nitrate/nitrite reduction in response to oxygen. Phosphorylated NreC binds to a GC-rich palindromic sequence at the promoters of the nitrate (narGHJI) and nitrite (nir) reductase operons, as well as the putative nitrate transporter gene narT, and activates their expression (By similarity).</text>
</comment>
<comment type="subcellular location">
    <subcellularLocation>
        <location evidence="4">Cytoplasm</location>
    </subcellularLocation>
</comment>
<comment type="PTM">
    <text evidence="1">Phosphorylated by NreB.</text>
</comment>
<feature type="chain" id="PRO_0000349354" description="Oxygen regulatory protein NreC">
    <location>
        <begin position="1"/>
        <end position="217"/>
    </location>
</feature>
<feature type="domain" description="Response regulatory" evidence="2">
    <location>
        <begin position="2"/>
        <end position="119"/>
    </location>
</feature>
<feature type="domain" description="HTH luxR-type" evidence="3">
    <location>
        <begin position="148"/>
        <end position="213"/>
    </location>
</feature>
<feature type="DNA-binding region" description="H-T-H motif" evidence="3">
    <location>
        <begin position="172"/>
        <end position="191"/>
    </location>
</feature>
<feature type="modified residue" description="4-aspartylphosphate" evidence="2">
    <location>
        <position position="53"/>
    </location>
</feature>
<organism>
    <name type="scientific">Staphylococcus aureus (strain USA300 / TCH1516)</name>
    <dbReference type="NCBI Taxonomy" id="451516"/>
    <lineage>
        <taxon>Bacteria</taxon>
        <taxon>Bacillati</taxon>
        <taxon>Bacillota</taxon>
        <taxon>Bacilli</taxon>
        <taxon>Bacillales</taxon>
        <taxon>Staphylococcaceae</taxon>
        <taxon>Staphylococcus</taxon>
    </lineage>
</organism>
<accession>A8Z580</accession>
<keyword id="KW-0010">Activator</keyword>
<keyword id="KW-0963">Cytoplasm</keyword>
<keyword id="KW-0238">DNA-binding</keyword>
<keyword id="KW-0597">Phosphoprotein</keyword>
<keyword id="KW-0804">Transcription</keyword>
<keyword id="KW-0805">Transcription regulation</keyword>
<keyword id="KW-0902">Two-component regulatory system</keyword>
<protein>
    <recommendedName>
        <fullName>Oxygen regulatory protein NreC</fullName>
    </recommendedName>
    <alternativeName>
        <fullName>Nitrogen regulation protein C</fullName>
    </alternativeName>
</protein>
<reference key="1">
    <citation type="journal article" date="2007" name="BMC Microbiol.">
        <title>Subtle genetic changes enhance virulence of methicillin resistant and sensitive Staphylococcus aureus.</title>
        <authorList>
            <person name="Highlander S.K."/>
            <person name="Hulten K.G."/>
            <person name="Qin X."/>
            <person name="Jiang H."/>
            <person name="Yerrapragada S."/>
            <person name="Mason E.O. Jr."/>
            <person name="Shang Y."/>
            <person name="Williams T.M."/>
            <person name="Fortunov R.M."/>
            <person name="Liu Y."/>
            <person name="Igboeli O."/>
            <person name="Petrosino J."/>
            <person name="Tirumalai M."/>
            <person name="Uzman A."/>
            <person name="Fox G.E."/>
            <person name="Cardenas A.M."/>
            <person name="Muzny D.M."/>
            <person name="Hemphill L."/>
            <person name="Ding Y."/>
            <person name="Dugan S."/>
            <person name="Blyth P.R."/>
            <person name="Buhay C.J."/>
            <person name="Dinh H.H."/>
            <person name="Hawes A.C."/>
            <person name="Holder M."/>
            <person name="Kovar C.L."/>
            <person name="Lee S.L."/>
            <person name="Liu W."/>
            <person name="Nazareth L.V."/>
            <person name="Wang Q."/>
            <person name="Zhou J."/>
            <person name="Kaplan S.L."/>
            <person name="Weinstock G.M."/>
        </authorList>
    </citation>
    <scope>NUCLEOTIDE SEQUENCE [LARGE SCALE GENOMIC DNA]</scope>
    <source>
        <strain>USA300 / TCH1516</strain>
    </source>
</reference>
<gene>
    <name type="primary">nreC</name>
    <name type="ordered locus">USA300HOU_2373</name>
</gene>
<sequence length="217" mass="24368">MKIVIADDHAVVRTGFSMILNYQNDMEVVATAADGVEAYQKVMEYKPDVLLMDLSMPPGESGLIATSKIADSFPETKILILTMFDDEEYLFHVLRNGAKGYILKNAPDEQLLLAIRTVYKGETYVDMKLTTSLVNEFVSNSNQDTANTTDPFKILSKRELEILPLIAKGYGNKEIAEKLFVSVKTVEAHKTHIMTKLGLKSKPELVEYALKKKLLEF</sequence>
<name>NREC_STAAT</name>
<dbReference type="EMBL" id="CP000730">
    <property type="protein sequence ID" value="ABX30363.1"/>
    <property type="molecule type" value="Genomic_DNA"/>
</dbReference>
<dbReference type="RefSeq" id="WP_000706315.1">
    <property type="nucleotide sequence ID" value="NC_010079.1"/>
</dbReference>
<dbReference type="SMR" id="A8Z580"/>
<dbReference type="KEGG" id="sax:USA300HOU_2373"/>
<dbReference type="HOGENOM" id="CLU_000445_90_1_9"/>
<dbReference type="GO" id="GO:0005737">
    <property type="term" value="C:cytoplasm"/>
    <property type="evidence" value="ECO:0007669"/>
    <property type="project" value="UniProtKB-SubCell"/>
</dbReference>
<dbReference type="GO" id="GO:0003677">
    <property type="term" value="F:DNA binding"/>
    <property type="evidence" value="ECO:0007669"/>
    <property type="project" value="UniProtKB-KW"/>
</dbReference>
<dbReference type="GO" id="GO:0000160">
    <property type="term" value="P:phosphorelay signal transduction system"/>
    <property type="evidence" value="ECO:0007669"/>
    <property type="project" value="UniProtKB-KW"/>
</dbReference>
<dbReference type="GO" id="GO:0006355">
    <property type="term" value="P:regulation of DNA-templated transcription"/>
    <property type="evidence" value="ECO:0007669"/>
    <property type="project" value="InterPro"/>
</dbReference>
<dbReference type="CDD" id="cd06170">
    <property type="entry name" value="LuxR_C_like"/>
    <property type="match status" value="1"/>
</dbReference>
<dbReference type="CDD" id="cd17535">
    <property type="entry name" value="REC_NarL-like"/>
    <property type="match status" value="1"/>
</dbReference>
<dbReference type="Gene3D" id="3.40.50.2300">
    <property type="match status" value="1"/>
</dbReference>
<dbReference type="InterPro" id="IPR011006">
    <property type="entry name" value="CheY-like_superfamily"/>
</dbReference>
<dbReference type="InterPro" id="IPR016032">
    <property type="entry name" value="Sig_transdc_resp-reg_C-effctor"/>
</dbReference>
<dbReference type="InterPro" id="IPR001789">
    <property type="entry name" value="Sig_transdc_resp-reg_receiver"/>
</dbReference>
<dbReference type="InterPro" id="IPR000792">
    <property type="entry name" value="Tscrpt_reg_LuxR_C"/>
</dbReference>
<dbReference type="InterPro" id="IPR039420">
    <property type="entry name" value="WalR-like"/>
</dbReference>
<dbReference type="PANTHER" id="PTHR43214:SF37">
    <property type="entry name" value="TRANSCRIPTIONAL REGULATORY PROTEIN YDFI"/>
    <property type="match status" value="1"/>
</dbReference>
<dbReference type="PANTHER" id="PTHR43214">
    <property type="entry name" value="TWO-COMPONENT RESPONSE REGULATOR"/>
    <property type="match status" value="1"/>
</dbReference>
<dbReference type="Pfam" id="PF00196">
    <property type="entry name" value="GerE"/>
    <property type="match status" value="1"/>
</dbReference>
<dbReference type="Pfam" id="PF00072">
    <property type="entry name" value="Response_reg"/>
    <property type="match status" value="1"/>
</dbReference>
<dbReference type="PRINTS" id="PR00038">
    <property type="entry name" value="HTHLUXR"/>
</dbReference>
<dbReference type="SMART" id="SM00421">
    <property type="entry name" value="HTH_LUXR"/>
    <property type="match status" value="1"/>
</dbReference>
<dbReference type="SMART" id="SM00448">
    <property type="entry name" value="REC"/>
    <property type="match status" value="1"/>
</dbReference>
<dbReference type="SUPFAM" id="SSF46894">
    <property type="entry name" value="C-terminal effector domain of the bipartite response regulators"/>
    <property type="match status" value="1"/>
</dbReference>
<dbReference type="SUPFAM" id="SSF52172">
    <property type="entry name" value="CheY-like"/>
    <property type="match status" value="1"/>
</dbReference>
<dbReference type="PROSITE" id="PS00622">
    <property type="entry name" value="HTH_LUXR_1"/>
    <property type="match status" value="1"/>
</dbReference>
<dbReference type="PROSITE" id="PS50043">
    <property type="entry name" value="HTH_LUXR_2"/>
    <property type="match status" value="1"/>
</dbReference>
<dbReference type="PROSITE" id="PS50110">
    <property type="entry name" value="RESPONSE_REGULATORY"/>
    <property type="match status" value="1"/>
</dbReference>